<feature type="chain" id="PRO_0000057223" description="Deoxyribose-phosphate aldolase">
    <location>
        <begin position="1"/>
        <end position="224"/>
    </location>
</feature>
<feature type="active site" description="Proton donor/acceptor" evidence="1">
    <location>
        <position position="92"/>
    </location>
</feature>
<feature type="active site" description="Schiff-base intermediate with acetaldehyde" evidence="1">
    <location>
        <position position="155"/>
    </location>
</feature>
<feature type="active site" description="Proton donor/acceptor" evidence="1">
    <location>
        <position position="184"/>
    </location>
</feature>
<feature type="helix" evidence="3">
    <location>
        <begin position="5"/>
        <end position="8"/>
    </location>
</feature>
<feature type="strand" evidence="3">
    <location>
        <begin position="9"/>
        <end position="12"/>
    </location>
</feature>
<feature type="helix" evidence="3">
    <location>
        <begin position="20"/>
        <end position="33"/>
    </location>
</feature>
<feature type="strand" evidence="3">
    <location>
        <begin position="36"/>
        <end position="40"/>
    </location>
</feature>
<feature type="helix" evidence="3">
    <location>
        <begin position="42"/>
        <end position="44"/>
    </location>
</feature>
<feature type="helix" evidence="3">
    <location>
        <begin position="45"/>
        <end position="51"/>
    </location>
</feature>
<feature type="turn" evidence="3">
    <location>
        <begin position="52"/>
        <end position="54"/>
    </location>
</feature>
<feature type="strand" evidence="3">
    <location>
        <begin position="58"/>
        <end position="65"/>
    </location>
</feature>
<feature type="turn" evidence="3">
    <location>
        <begin position="66"/>
        <end position="68"/>
    </location>
</feature>
<feature type="helix" evidence="3">
    <location>
        <begin position="73"/>
        <end position="86"/>
    </location>
</feature>
<feature type="strand" evidence="3">
    <location>
        <begin position="89"/>
        <end position="94"/>
    </location>
</feature>
<feature type="helix" evidence="3">
    <location>
        <begin position="97"/>
        <end position="101"/>
    </location>
</feature>
<feature type="helix" evidence="3">
    <location>
        <begin position="105"/>
        <end position="119"/>
    </location>
</feature>
<feature type="turn" evidence="3">
    <location>
        <begin position="120"/>
        <end position="122"/>
    </location>
</feature>
<feature type="strand" evidence="3">
    <location>
        <begin position="124"/>
        <end position="128"/>
    </location>
</feature>
<feature type="helix" evidence="3">
    <location>
        <begin position="131"/>
        <end position="133"/>
    </location>
</feature>
<feature type="helix" evidence="3">
    <location>
        <begin position="136"/>
        <end position="149"/>
    </location>
</feature>
<feature type="strand" evidence="3">
    <location>
        <begin position="152"/>
        <end position="155"/>
    </location>
</feature>
<feature type="strand" evidence="3">
    <location>
        <begin position="159"/>
        <end position="162"/>
    </location>
</feature>
<feature type="helix" evidence="3">
    <location>
        <begin position="167"/>
        <end position="177"/>
    </location>
</feature>
<feature type="strand" evidence="3">
    <location>
        <begin position="180"/>
        <end position="188"/>
    </location>
</feature>
<feature type="helix" evidence="3">
    <location>
        <begin position="192"/>
        <end position="200"/>
    </location>
</feature>
<feature type="strand" evidence="3">
    <location>
        <begin position="204"/>
        <end position="209"/>
    </location>
</feature>
<feature type="helix" evidence="3">
    <location>
        <begin position="211"/>
        <end position="220"/>
    </location>
</feature>
<name>DEOC_HALH5</name>
<comment type="function">
    <text evidence="1">Catalyzes a reversible aldol reaction between acetaldehyde and D-glyceraldehyde 3-phosphate to generate 2-deoxy-D-ribose 5-phosphate.</text>
</comment>
<comment type="catalytic activity">
    <reaction evidence="1">
        <text>2-deoxy-D-ribose 5-phosphate = D-glyceraldehyde 3-phosphate + acetaldehyde</text>
        <dbReference type="Rhea" id="RHEA:12821"/>
        <dbReference type="ChEBI" id="CHEBI:15343"/>
        <dbReference type="ChEBI" id="CHEBI:59776"/>
        <dbReference type="ChEBI" id="CHEBI:62877"/>
        <dbReference type="EC" id="4.1.2.4"/>
    </reaction>
</comment>
<comment type="pathway">
    <text evidence="1">Carbohydrate degradation; 2-deoxy-D-ribose 1-phosphate degradation; D-glyceraldehyde 3-phosphate and acetaldehyde from 2-deoxy-alpha-D-ribose 1-phosphate: step 2/2.</text>
</comment>
<comment type="subcellular location">
    <subcellularLocation>
        <location evidence="1">Cytoplasm</location>
    </subcellularLocation>
</comment>
<comment type="similarity">
    <text evidence="1 2">Belongs to the DeoC/FbaB aldolase family. DeoC type 1 subfamily.</text>
</comment>
<gene>
    <name evidence="1" type="primary">deoC</name>
    <name type="synonym">dra</name>
    <name type="ordered locus">BH1352</name>
</gene>
<proteinExistence type="evidence at protein level"/>
<evidence type="ECO:0000255" key="1">
    <source>
        <dbReference type="HAMAP-Rule" id="MF_00114"/>
    </source>
</evidence>
<evidence type="ECO:0000305" key="2"/>
<evidence type="ECO:0007829" key="3">
    <source>
        <dbReference type="PDB" id="6MSW"/>
    </source>
</evidence>
<keyword id="KW-0002">3D-structure</keyword>
<keyword id="KW-0963">Cytoplasm</keyword>
<keyword id="KW-0456">Lyase</keyword>
<keyword id="KW-1185">Reference proteome</keyword>
<keyword id="KW-0704">Schiff base</keyword>
<protein>
    <recommendedName>
        <fullName evidence="1">Deoxyribose-phosphate aldolase</fullName>
        <shortName evidence="1">DERA</shortName>
        <ecNumber evidence="1">4.1.2.4</ecNumber>
    </recommendedName>
    <alternativeName>
        <fullName evidence="1">2-deoxy-D-ribose 5-phosphate aldolase</fullName>
    </alternativeName>
    <alternativeName>
        <fullName evidence="1">Phosphodeoxyriboaldolase</fullName>
        <shortName evidence="1">Deoxyriboaldolase</shortName>
    </alternativeName>
</protein>
<sequence>MSRSIAQMIDHTLLKPNTTEDQIVKLCEEAKEYSFASVCVNPTWVALAAQLLKDAPDVKVCTVIGFPLGATTPEVKAFETTNAIENGATEVDMVINIGALKDKQYELVGRDIQAVVKAAEGKALTKVIIETSLLTEEEKKAACELAVKAGADFVKTSTGFSGGGATAEDIALMRKVVGPNLGVKASGGVRDLSDAKAMIDAGATRIGASAGVAIVNGERSEGSY</sequence>
<reference key="1">
    <citation type="journal article" date="2000" name="Nucleic Acids Res.">
        <title>Complete genome sequence of the alkaliphilic bacterium Bacillus halodurans and genomic sequence comparison with Bacillus subtilis.</title>
        <authorList>
            <person name="Takami H."/>
            <person name="Nakasone K."/>
            <person name="Takaki Y."/>
            <person name="Maeno G."/>
            <person name="Sasaki R."/>
            <person name="Masui N."/>
            <person name="Fuji F."/>
            <person name="Hirama C."/>
            <person name="Nakamura Y."/>
            <person name="Ogasawara N."/>
            <person name="Kuhara S."/>
            <person name="Horikoshi K."/>
        </authorList>
    </citation>
    <scope>NUCLEOTIDE SEQUENCE [LARGE SCALE GENOMIC DNA]</scope>
    <source>
        <strain>ATCC BAA-125 / DSM 18197 / FERM 7344 / JCM 9153 / C-125</strain>
    </source>
</reference>
<dbReference type="EC" id="4.1.2.4" evidence="1"/>
<dbReference type="EMBL" id="BA000004">
    <property type="protein sequence ID" value="BAB05071.1"/>
    <property type="molecule type" value="Genomic_DNA"/>
</dbReference>
<dbReference type="PIR" id="H83818">
    <property type="entry name" value="H83818"/>
</dbReference>
<dbReference type="RefSeq" id="WP_010897517.1">
    <property type="nucleotide sequence ID" value="NC_002570.2"/>
</dbReference>
<dbReference type="PDB" id="6D33">
    <property type="method" value="X-ray"/>
    <property type="resolution" value="2.50 A"/>
    <property type="chains" value="A/B/C/D/E/F=1-224"/>
</dbReference>
<dbReference type="PDB" id="6MSW">
    <property type="method" value="X-ray"/>
    <property type="resolution" value="2.17 A"/>
    <property type="chains" value="A/B/C/D/E/F=1-224"/>
</dbReference>
<dbReference type="PDBsum" id="6D33"/>
<dbReference type="PDBsum" id="6MSW"/>
<dbReference type="SMR" id="Q9KD67"/>
<dbReference type="STRING" id="272558.gene:10727246"/>
<dbReference type="KEGG" id="bha:BH1352"/>
<dbReference type="eggNOG" id="COG0274">
    <property type="taxonomic scope" value="Bacteria"/>
</dbReference>
<dbReference type="HOGENOM" id="CLU_053595_0_2_9"/>
<dbReference type="OrthoDB" id="9778711at2"/>
<dbReference type="UniPathway" id="UPA00002">
    <property type="reaction ID" value="UER00468"/>
</dbReference>
<dbReference type="Proteomes" id="UP000001258">
    <property type="component" value="Chromosome"/>
</dbReference>
<dbReference type="GO" id="GO:0005737">
    <property type="term" value="C:cytoplasm"/>
    <property type="evidence" value="ECO:0007669"/>
    <property type="project" value="UniProtKB-SubCell"/>
</dbReference>
<dbReference type="GO" id="GO:0004139">
    <property type="term" value="F:deoxyribose-phosphate aldolase activity"/>
    <property type="evidence" value="ECO:0007669"/>
    <property type="project" value="UniProtKB-UniRule"/>
</dbReference>
<dbReference type="GO" id="GO:0006018">
    <property type="term" value="P:2-deoxyribose 1-phosphate catabolic process"/>
    <property type="evidence" value="ECO:0007669"/>
    <property type="project" value="UniProtKB-UniRule"/>
</dbReference>
<dbReference type="GO" id="GO:0016052">
    <property type="term" value="P:carbohydrate catabolic process"/>
    <property type="evidence" value="ECO:0007669"/>
    <property type="project" value="TreeGrafter"/>
</dbReference>
<dbReference type="GO" id="GO:0009264">
    <property type="term" value="P:deoxyribonucleotide catabolic process"/>
    <property type="evidence" value="ECO:0007669"/>
    <property type="project" value="InterPro"/>
</dbReference>
<dbReference type="CDD" id="cd00959">
    <property type="entry name" value="DeoC"/>
    <property type="match status" value="1"/>
</dbReference>
<dbReference type="FunFam" id="3.20.20.70:FF:000044">
    <property type="entry name" value="Deoxyribose-phosphate aldolase"/>
    <property type="match status" value="1"/>
</dbReference>
<dbReference type="Gene3D" id="3.20.20.70">
    <property type="entry name" value="Aldolase class I"/>
    <property type="match status" value="1"/>
</dbReference>
<dbReference type="HAMAP" id="MF_00114">
    <property type="entry name" value="DeoC_type1"/>
    <property type="match status" value="1"/>
</dbReference>
<dbReference type="InterPro" id="IPR013785">
    <property type="entry name" value="Aldolase_TIM"/>
</dbReference>
<dbReference type="InterPro" id="IPR011343">
    <property type="entry name" value="DeoC"/>
</dbReference>
<dbReference type="InterPro" id="IPR002915">
    <property type="entry name" value="DeoC/FbaB/LacD_aldolase"/>
</dbReference>
<dbReference type="InterPro" id="IPR028581">
    <property type="entry name" value="DeoC_typeI"/>
</dbReference>
<dbReference type="NCBIfam" id="TIGR00126">
    <property type="entry name" value="deoC"/>
    <property type="match status" value="1"/>
</dbReference>
<dbReference type="PANTHER" id="PTHR10889">
    <property type="entry name" value="DEOXYRIBOSE-PHOSPHATE ALDOLASE"/>
    <property type="match status" value="1"/>
</dbReference>
<dbReference type="PANTHER" id="PTHR10889:SF1">
    <property type="entry name" value="DEOXYRIBOSE-PHOSPHATE ALDOLASE"/>
    <property type="match status" value="1"/>
</dbReference>
<dbReference type="Pfam" id="PF01791">
    <property type="entry name" value="DeoC"/>
    <property type="match status" value="1"/>
</dbReference>
<dbReference type="PIRSF" id="PIRSF001357">
    <property type="entry name" value="DeoC"/>
    <property type="match status" value="1"/>
</dbReference>
<dbReference type="SMART" id="SM01133">
    <property type="entry name" value="DeoC"/>
    <property type="match status" value="1"/>
</dbReference>
<dbReference type="SUPFAM" id="SSF51569">
    <property type="entry name" value="Aldolase"/>
    <property type="match status" value="1"/>
</dbReference>
<accession>Q9KD67</accession>
<organism>
    <name type="scientific">Halalkalibacterium halodurans (strain ATCC BAA-125 / DSM 18197 / FERM 7344 / JCM 9153 / C-125)</name>
    <name type="common">Bacillus halodurans</name>
    <dbReference type="NCBI Taxonomy" id="272558"/>
    <lineage>
        <taxon>Bacteria</taxon>
        <taxon>Bacillati</taxon>
        <taxon>Bacillota</taxon>
        <taxon>Bacilli</taxon>
        <taxon>Bacillales</taxon>
        <taxon>Bacillaceae</taxon>
        <taxon>Halalkalibacterium (ex Joshi et al. 2022)</taxon>
    </lineage>
</organism>